<sequence length="361" mass="38832">MLYWLTSISDGGDAFNLFRYITFRAGGAFFTALIFGFIFGRPLINLLRKRQRFGQPIREDGPESHLETKQGTPTMGGLLILSALTLATLLWARWDNGYVWLVLFVTVSFGLIGFMDDFQKVTKNSHAGVSGRVRLAMGFGIAGIAGAGALLLHPEPLAGQLALPVFKDTLINLSILFIPFCMIVIAGSANAVNLTDGLDGLAIMPVMIAAGTLGVIAYAVGRVDFTSYLDVHYVPGTGEIFVFTSALIGGGLGFLWYNAPPAAVFMGDTGSLALGGALGAIAVATKHEIVLVVVGGIFVVEALSVIIQVAYFKKTGKRVFLMAPIHHHFEKKGWQESQIVIRFWIISLILALIGLATLKVR</sequence>
<name>MRAY_DINSH</name>
<organism>
    <name type="scientific">Dinoroseobacter shibae (strain DSM 16493 / NCIMB 14021 / DFL 12)</name>
    <dbReference type="NCBI Taxonomy" id="398580"/>
    <lineage>
        <taxon>Bacteria</taxon>
        <taxon>Pseudomonadati</taxon>
        <taxon>Pseudomonadota</taxon>
        <taxon>Alphaproteobacteria</taxon>
        <taxon>Rhodobacterales</taxon>
        <taxon>Roseobacteraceae</taxon>
        <taxon>Dinoroseobacter</taxon>
    </lineage>
</organism>
<gene>
    <name evidence="1" type="primary">mraY</name>
    <name type="ordered locus">Dshi_2469</name>
</gene>
<accession>A8LSB0</accession>
<comment type="function">
    <text evidence="1">Catalyzes the initial step of the lipid cycle reactions in the biosynthesis of the cell wall peptidoglycan: transfers peptidoglycan precursor phospho-MurNAc-pentapeptide from UDP-MurNAc-pentapeptide onto the lipid carrier undecaprenyl phosphate, yielding undecaprenyl-pyrophosphoryl-MurNAc-pentapeptide, known as lipid I.</text>
</comment>
<comment type="catalytic activity">
    <reaction evidence="1">
        <text>UDP-N-acetyl-alpha-D-muramoyl-L-alanyl-gamma-D-glutamyl-meso-2,6-diaminopimeloyl-D-alanyl-D-alanine + di-trans,octa-cis-undecaprenyl phosphate = di-trans,octa-cis-undecaprenyl diphospho-N-acetyl-alpha-D-muramoyl-L-alanyl-D-glutamyl-meso-2,6-diaminopimeloyl-D-alanyl-D-alanine + UMP</text>
        <dbReference type="Rhea" id="RHEA:28386"/>
        <dbReference type="ChEBI" id="CHEBI:57865"/>
        <dbReference type="ChEBI" id="CHEBI:60392"/>
        <dbReference type="ChEBI" id="CHEBI:61386"/>
        <dbReference type="ChEBI" id="CHEBI:61387"/>
        <dbReference type="EC" id="2.7.8.13"/>
    </reaction>
</comment>
<comment type="cofactor">
    <cofactor evidence="1">
        <name>Mg(2+)</name>
        <dbReference type="ChEBI" id="CHEBI:18420"/>
    </cofactor>
</comment>
<comment type="pathway">
    <text evidence="1">Cell wall biogenesis; peptidoglycan biosynthesis.</text>
</comment>
<comment type="subcellular location">
    <subcellularLocation>
        <location evidence="1">Cell inner membrane</location>
        <topology evidence="1">Multi-pass membrane protein</topology>
    </subcellularLocation>
</comment>
<comment type="similarity">
    <text evidence="1">Belongs to the glycosyltransferase 4 family. MraY subfamily.</text>
</comment>
<dbReference type="EC" id="2.7.8.13" evidence="1"/>
<dbReference type="EMBL" id="CP000830">
    <property type="protein sequence ID" value="ABV94203.1"/>
    <property type="molecule type" value="Genomic_DNA"/>
</dbReference>
<dbReference type="RefSeq" id="WP_012179134.1">
    <property type="nucleotide sequence ID" value="NC_009952.1"/>
</dbReference>
<dbReference type="SMR" id="A8LSB0"/>
<dbReference type="STRING" id="398580.Dshi_2469"/>
<dbReference type="KEGG" id="dsh:Dshi_2469"/>
<dbReference type="eggNOG" id="COG0472">
    <property type="taxonomic scope" value="Bacteria"/>
</dbReference>
<dbReference type="HOGENOM" id="CLU_023982_0_0_5"/>
<dbReference type="OrthoDB" id="9805475at2"/>
<dbReference type="UniPathway" id="UPA00219"/>
<dbReference type="Proteomes" id="UP000006833">
    <property type="component" value="Chromosome"/>
</dbReference>
<dbReference type="GO" id="GO:0005886">
    <property type="term" value="C:plasma membrane"/>
    <property type="evidence" value="ECO:0007669"/>
    <property type="project" value="UniProtKB-SubCell"/>
</dbReference>
<dbReference type="GO" id="GO:0046872">
    <property type="term" value="F:metal ion binding"/>
    <property type="evidence" value="ECO:0007669"/>
    <property type="project" value="UniProtKB-KW"/>
</dbReference>
<dbReference type="GO" id="GO:0008963">
    <property type="term" value="F:phospho-N-acetylmuramoyl-pentapeptide-transferase activity"/>
    <property type="evidence" value="ECO:0007669"/>
    <property type="project" value="UniProtKB-UniRule"/>
</dbReference>
<dbReference type="GO" id="GO:0051992">
    <property type="term" value="F:UDP-N-acetylmuramoyl-L-alanyl-D-glutamyl-meso-2,6-diaminopimelyl-D-alanyl-D-alanine:undecaprenyl-phosphate transferase activity"/>
    <property type="evidence" value="ECO:0007669"/>
    <property type="project" value="RHEA"/>
</dbReference>
<dbReference type="GO" id="GO:0051301">
    <property type="term" value="P:cell division"/>
    <property type="evidence" value="ECO:0007669"/>
    <property type="project" value="UniProtKB-KW"/>
</dbReference>
<dbReference type="GO" id="GO:0071555">
    <property type="term" value="P:cell wall organization"/>
    <property type="evidence" value="ECO:0007669"/>
    <property type="project" value="UniProtKB-KW"/>
</dbReference>
<dbReference type="GO" id="GO:0009252">
    <property type="term" value="P:peptidoglycan biosynthetic process"/>
    <property type="evidence" value="ECO:0007669"/>
    <property type="project" value="UniProtKB-UniRule"/>
</dbReference>
<dbReference type="GO" id="GO:0008360">
    <property type="term" value="P:regulation of cell shape"/>
    <property type="evidence" value="ECO:0007669"/>
    <property type="project" value="UniProtKB-KW"/>
</dbReference>
<dbReference type="CDD" id="cd06852">
    <property type="entry name" value="GT_MraY"/>
    <property type="match status" value="1"/>
</dbReference>
<dbReference type="HAMAP" id="MF_00038">
    <property type="entry name" value="MraY"/>
    <property type="match status" value="1"/>
</dbReference>
<dbReference type="InterPro" id="IPR000715">
    <property type="entry name" value="Glycosyl_transferase_4"/>
</dbReference>
<dbReference type="InterPro" id="IPR003524">
    <property type="entry name" value="PNAcMuramoyl-5peptid_Trfase"/>
</dbReference>
<dbReference type="InterPro" id="IPR018480">
    <property type="entry name" value="PNAcMuramoyl-5peptid_Trfase_CS"/>
</dbReference>
<dbReference type="NCBIfam" id="TIGR00445">
    <property type="entry name" value="mraY"/>
    <property type="match status" value="1"/>
</dbReference>
<dbReference type="PANTHER" id="PTHR22926">
    <property type="entry name" value="PHOSPHO-N-ACETYLMURAMOYL-PENTAPEPTIDE-TRANSFERASE"/>
    <property type="match status" value="1"/>
</dbReference>
<dbReference type="PANTHER" id="PTHR22926:SF5">
    <property type="entry name" value="PHOSPHO-N-ACETYLMURAMOYL-PENTAPEPTIDE-TRANSFERASE HOMOLOG"/>
    <property type="match status" value="1"/>
</dbReference>
<dbReference type="Pfam" id="PF00953">
    <property type="entry name" value="Glycos_transf_4"/>
    <property type="match status" value="1"/>
</dbReference>
<dbReference type="Pfam" id="PF10555">
    <property type="entry name" value="MraY_sig1"/>
    <property type="match status" value="1"/>
</dbReference>
<dbReference type="PROSITE" id="PS01347">
    <property type="entry name" value="MRAY_1"/>
    <property type="match status" value="1"/>
</dbReference>
<dbReference type="PROSITE" id="PS01348">
    <property type="entry name" value="MRAY_2"/>
    <property type="match status" value="1"/>
</dbReference>
<feature type="chain" id="PRO_1000074541" description="Phospho-N-acetylmuramoyl-pentapeptide-transferase">
    <location>
        <begin position="1"/>
        <end position="361"/>
    </location>
</feature>
<feature type="transmembrane region" description="Helical" evidence="1">
    <location>
        <begin position="27"/>
        <end position="47"/>
    </location>
</feature>
<feature type="transmembrane region" description="Helical" evidence="1">
    <location>
        <begin position="72"/>
        <end position="92"/>
    </location>
</feature>
<feature type="transmembrane region" description="Helical" evidence="1">
    <location>
        <begin position="98"/>
        <end position="118"/>
    </location>
</feature>
<feature type="transmembrane region" description="Helical" evidence="1">
    <location>
        <begin position="135"/>
        <end position="155"/>
    </location>
</feature>
<feature type="transmembrane region" description="Helical" evidence="1">
    <location>
        <begin position="169"/>
        <end position="189"/>
    </location>
</feature>
<feature type="transmembrane region" description="Helical" evidence="1">
    <location>
        <begin position="200"/>
        <end position="220"/>
    </location>
</feature>
<feature type="transmembrane region" description="Helical" evidence="1">
    <location>
        <begin position="240"/>
        <end position="260"/>
    </location>
</feature>
<feature type="transmembrane region" description="Helical" evidence="1">
    <location>
        <begin position="263"/>
        <end position="283"/>
    </location>
</feature>
<feature type="transmembrane region" description="Helical" evidence="1">
    <location>
        <begin position="289"/>
        <end position="309"/>
    </location>
</feature>
<feature type="transmembrane region" description="Helical" evidence="1">
    <location>
        <begin position="338"/>
        <end position="358"/>
    </location>
</feature>
<evidence type="ECO:0000255" key="1">
    <source>
        <dbReference type="HAMAP-Rule" id="MF_00038"/>
    </source>
</evidence>
<proteinExistence type="inferred from homology"/>
<keyword id="KW-0131">Cell cycle</keyword>
<keyword id="KW-0132">Cell division</keyword>
<keyword id="KW-0997">Cell inner membrane</keyword>
<keyword id="KW-1003">Cell membrane</keyword>
<keyword id="KW-0133">Cell shape</keyword>
<keyword id="KW-0961">Cell wall biogenesis/degradation</keyword>
<keyword id="KW-0460">Magnesium</keyword>
<keyword id="KW-0472">Membrane</keyword>
<keyword id="KW-0479">Metal-binding</keyword>
<keyword id="KW-0573">Peptidoglycan synthesis</keyword>
<keyword id="KW-1185">Reference proteome</keyword>
<keyword id="KW-0808">Transferase</keyword>
<keyword id="KW-0812">Transmembrane</keyword>
<keyword id="KW-1133">Transmembrane helix</keyword>
<protein>
    <recommendedName>
        <fullName evidence="1">Phospho-N-acetylmuramoyl-pentapeptide-transferase</fullName>
        <ecNumber evidence="1">2.7.8.13</ecNumber>
    </recommendedName>
    <alternativeName>
        <fullName evidence="1">UDP-MurNAc-pentapeptide phosphotransferase</fullName>
    </alternativeName>
</protein>
<reference key="1">
    <citation type="journal article" date="2010" name="ISME J.">
        <title>The complete genome sequence of the algal symbiont Dinoroseobacter shibae: a hitchhiker's guide to life in the sea.</title>
        <authorList>
            <person name="Wagner-Dobler I."/>
            <person name="Ballhausen B."/>
            <person name="Berger M."/>
            <person name="Brinkhoff T."/>
            <person name="Buchholz I."/>
            <person name="Bunk B."/>
            <person name="Cypionka H."/>
            <person name="Daniel R."/>
            <person name="Drepper T."/>
            <person name="Gerdts G."/>
            <person name="Hahnke S."/>
            <person name="Han C."/>
            <person name="Jahn D."/>
            <person name="Kalhoefer D."/>
            <person name="Kiss H."/>
            <person name="Klenk H.P."/>
            <person name="Kyrpides N."/>
            <person name="Liebl W."/>
            <person name="Liesegang H."/>
            <person name="Meincke L."/>
            <person name="Pati A."/>
            <person name="Petersen J."/>
            <person name="Piekarski T."/>
            <person name="Pommerenke C."/>
            <person name="Pradella S."/>
            <person name="Pukall R."/>
            <person name="Rabus R."/>
            <person name="Stackebrandt E."/>
            <person name="Thole S."/>
            <person name="Thompson L."/>
            <person name="Tielen P."/>
            <person name="Tomasch J."/>
            <person name="von Jan M."/>
            <person name="Wanphrut N."/>
            <person name="Wichels A."/>
            <person name="Zech H."/>
            <person name="Simon M."/>
        </authorList>
    </citation>
    <scope>NUCLEOTIDE SEQUENCE [LARGE SCALE GENOMIC DNA]</scope>
    <source>
        <strain>DSM 16493 / NCIMB 14021 / DFL 12</strain>
    </source>
</reference>